<gene>
    <name type="primary">GRF2</name>
    <name type="ordered locus">At4g37740</name>
    <name type="ORF">T28I19.20</name>
</gene>
<keyword id="KW-0010">Activator</keyword>
<keyword id="KW-0539">Nucleus</keyword>
<keyword id="KW-1185">Reference proteome</keyword>
<keyword id="KW-0804">Transcription</keyword>
<keyword id="KW-0805">Transcription regulation</keyword>
<accession>Q8L8A8</accession>
<accession>Q9T063</accession>
<name>GRF2_ARATH</name>
<sequence>MDIGVHVLGSVTSNENESLGLKELIGTKQDRSGFIGEDCLQRSLKLARTTTRAEEEENLSSSVAAAYCKTMSFHQGIPLMRSASPLSSDSRRQEQMLSFSDKPDALDFSKYVGLDNSSNNKNSLSPFLHQIPPPSYFRSSGGYGSGGMMMNMSMQGNFTGVKGPFTLTQWAELEQQALIYKYITANVPVPSSLLISIKKSFYPYGSLPPSSFGWGTFHLGFAGGNMDPEPGRCRRTDGKKWRCSRDAVPDQKYCERHINRGRHRSRKPVEVQSGQNQTAAAASKAVTTPQQPVVAGNTNRSNARASSNRSLAIGSQYINPSTESLPNNRGVSIYPSTVNLQPKESPVIHQKHRNNNNPFEFGHISSDSLLNPNTAKTYGSSFLDFSSNQEKHSGNHNHNSWPEELTSDWTQLSMSIPIASSSPSSTHNNNNAQEKTTLSPLRLSRELDLSIQTDETTIEPTVKKVNTWIPISWGNSLGGPLGEVLNSTTNSPTFGSSPTGVLQKSTFCSLSNNSSVSSPIAENNRHNGDYFHYTT</sequence>
<dbReference type="EMBL" id="AY102635">
    <property type="protein sequence ID" value="AAM52877.1"/>
    <property type="molecule type" value="mRNA"/>
</dbReference>
<dbReference type="EMBL" id="AL035709">
    <property type="protein sequence ID" value="CAB38922.1"/>
    <property type="status" value="ALT_SEQ"/>
    <property type="molecule type" value="Genomic_DNA"/>
</dbReference>
<dbReference type="EMBL" id="AL161592">
    <property type="protein sequence ID" value="CAB80439.1"/>
    <property type="status" value="ALT_SEQ"/>
    <property type="molecule type" value="Genomic_DNA"/>
</dbReference>
<dbReference type="EMBL" id="CP002687">
    <property type="protein sequence ID" value="AEE86833.1"/>
    <property type="molecule type" value="Genomic_DNA"/>
</dbReference>
<dbReference type="EMBL" id="AK176372">
    <property type="protein sequence ID" value="BAD44135.1"/>
    <property type="molecule type" value="mRNA"/>
</dbReference>
<dbReference type="EMBL" id="AK176432">
    <property type="protein sequence ID" value="BAD44195.1"/>
    <property type="molecule type" value="mRNA"/>
</dbReference>
<dbReference type="EMBL" id="AB493726">
    <property type="protein sequence ID" value="BAH30564.1"/>
    <property type="molecule type" value="mRNA"/>
</dbReference>
<dbReference type="PIR" id="T06021">
    <property type="entry name" value="T06021"/>
</dbReference>
<dbReference type="RefSeq" id="NP_195488.2">
    <property type="nucleotide sequence ID" value="NM_119936.5"/>
</dbReference>
<dbReference type="BioGRID" id="15211">
    <property type="interactions" value="25"/>
</dbReference>
<dbReference type="FunCoup" id="Q8L8A8">
    <property type="interactions" value="299"/>
</dbReference>
<dbReference type="IntAct" id="Q8L8A8">
    <property type="interactions" value="26"/>
</dbReference>
<dbReference type="STRING" id="3702.Q8L8A8"/>
<dbReference type="iPTMnet" id="Q8L8A8"/>
<dbReference type="PaxDb" id="3702-AT4G37740.1"/>
<dbReference type="ProteomicsDB" id="247286"/>
<dbReference type="EnsemblPlants" id="AT4G37740.1">
    <property type="protein sequence ID" value="AT4G37740.1"/>
    <property type="gene ID" value="AT4G37740"/>
</dbReference>
<dbReference type="GeneID" id="829930"/>
<dbReference type="Gramene" id="AT4G37740.1">
    <property type="protein sequence ID" value="AT4G37740.1"/>
    <property type="gene ID" value="AT4G37740"/>
</dbReference>
<dbReference type="KEGG" id="ath:AT4G37740"/>
<dbReference type="Araport" id="AT4G37740"/>
<dbReference type="TAIR" id="AT4G37740">
    <property type="gene designation" value="GRF2"/>
</dbReference>
<dbReference type="eggNOG" id="ENOG502QRK7">
    <property type="taxonomic scope" value="Eukaryota"/>
</dbReference>
<dbReference type="HOGENOM" id="CLU_038207_0_0_1"/>
<dbReference type="InParanoid" id="Q8L8A8"/>
<dbReference type="OMA" id="PPYCRTP"/>
<dbReference type="PhylomeDB" id="Q8L8A8"/>
<dbReference type="PRO" id="PR:Q8L8A8"/>
<dbReference type="Proteomes" id="UP000006548">
    <property type="component" value="Chromosome 4"/>
</dbReference>
<dbReference type="ExpressionAtlas" id="Q8L8A8">
    <property type="expression patterns" value="baseline and differential"/>
</dbReference>
<dbReference type="GO" id="GO:0005634">
    <property type="term" value="C:nucleus"/>
    <property type="evidence" value="ECO:0000314"/>
    <property type="project" value="TAIR"/>
</dbReference>
<dbReference type="GO" id="GO:0005524">
    <property type="term" value="F:ATP binding"/>
    <property type="evidence" value="ECO:0007669"/>
    <property type="project" value="InterPro"/>
</dbReference>
<dbReference type="GO" id="GO:0000976">
    <property type="term" value="F:transcription cis-regulatory region binding"/>
    <property type="evidence" value="ECO:0000353"/>
    <property type="project" value="TAIR"/>
</dbReference>
<dbReference type="GO" id="GO:0006351">
    <property type="term" value="P:DNA-templated transcription"/>
    <property type="evidence" value="ECO:0007669"/>
    <property type="project" value="InterPro"/>
</dbReference>
<dbReference type="GO" id="GO:0008285">
    <property type="term" value="P:negative regulation of cell population proliferation"/>
    <property type="evidence" value="ECO:0000315"/>
    <property type="project" value="TAIR"/>
</dbReference>
<dbReference type="GO" id="GO:0006355">
    <property type="term" value="P:regulation of DNA-templated transcription"/>
    <property type="evidence" value="ECO:0007669"/>
    <property type="project" value="InterPro"/>
</dbReference>
<dbReference type="GO" id="GO:0048364">
    <property type="term" value="P:root development"/>
    <property type="evidence" value="ECO:0000315"/>
    <property type="project" value="TAIR"/>
</dbReference>
<dbReference type="InterPro" id="IPR014978">
    <property type="entry name" value="Gln-Leu-Gln_QLQ"/>
</dbReference>
<dbReference type="InterPro" id="IPR031137">
    <property type="entry name" value="GRF"/>
</dbReference>
<dbReference type="InterPro" id="IPR014977">
    <property type="entry name" value="WRC_dom"/>
</dbReference>
<dbReference type="PANTHER" id="PTHR31602:SF42">
    <property type="entry name" value="GROWTH-REGULATING FACTOR 2"/>
    <property type="match status" value="1"/>
</dbReference>
<dbReference type="PANTHER" id="PTHR31602">
    <property type="entry name" value="GROWTH-REGULATING FACTOR 5"/>
    <property type="match status" value="1"/>
</dbReference>
<dbReference type="Pfam" id="PF08880">
    <property type="entry name" value="QLQ"/>
    <property type="match status" value="1"/>
</dbReference>
<dbReference type="Pfam" id="PF08879">
    <property type="entry name" value="WRC"/>
    <property type="match status" value="1"/>
</dbReference>
<dbReference type="SMART" id="SM00951">
    <property type="entry name" value="QLQ"/>
    <property type="match status" value="1"/>
</dbReference>
<dbReference type="PROSITE" id="PS51666">
    <property type="entry name" value="QLQ"/>
    <property type="match status" value="1"/>
</dbReference>
<dbReference type="PROSITE" id="PS51667">
    <property type="entry name" value="WRC"/>
    <property type="match status" value="1"/>
</dbReference>
<feature type="chain" id="PRO_0000419293" description="Growth-regulating factor 2">
    <location>
        <begin position="1"/>
        <end position="535"/>
    </location>
</feature>
<feature type="domain" description="QLQ" evidence="1">
    <location>
        <begin position="164"/>
        <end position="199"/>
    </location>
</feature>
<feature type="domain" description="WRC" evidence="2">
    <location>
        <begin position="227"/>
        <end position="271"/>
    </location>
</feature>
<feature type="region of interest" description="Disordered" evidence="3">
    <location>
        <begin position="260"/>
        <end position="308"/>
    </location>
</feature>
<feature type="region of interest" description="Disordered" evidence="3">
    <location>
        <begin position="417"/>
        <end position="437"/>
    </location>
</feature>
<feature type="region of interest" description="Disordered" evidence="3">
    <location>
        <begin position="514"/>
        <end position="535"/>
    </location>
</feature>
<feature type="short sequence motif" description="Bipartite nuclear localization signal" evidence="2">
    <location>
        <begin position="232"/>
        <end position="242"/>
    </location>
</feature>
<feature type="short sequence motif" description="Bipartite nuclear localization signal" evidence="2">
    <location>
        <begin position="260"/>
        <end position="267"/>
    </location>
</feature>
<feature type="compositionally biased region" description="Polar residues" evidence="3">
    <location>
        <begin position="272"/>
        <end position="291"/>
    </location>
</feature>
<feature type="compositionally biased region" description="Low complexity" evidence="3">
    <location>
        <begin position="299"/>
        <end position="308"/>
    </location>
</feature>
<feature type="compositionally biased region" description="Polar residues" evidence="3">
    <location>
        <begin position="426"/>
        <end position="437"/>
    </location>
</feature>
<evidence type="ECO:0000255" key="1">
    <source>
        <dbReference type="PROSITE-ProRule" id="PRU01001"/>
    </source>
</evidence>
<evidence type="ECO:0000255" key="2">
    <source>
        <dbReference type="PROSITE-ProRule" id="PRU01002"/>
    </source>
</evidence>
<evidence type="ECO:0000256" key="3">
    <source>
        <dbReference type="SAM" id="MobiDB-lite"/>
    </source>
</evidence>
<evidence type="ECO:0000269" key="4">
    <source>
    </source>
</evidence>
<evidence type="ECO:0000269" key="5">
    <source>
    </source>
</evidence>
<evidence type="ECO:0000269" key="6">
    <source>
    </source>
</evidence>
<evidence type="ECO:0000269" key="7">
    <source>
    </source>
</evidence>
<evidence type="ECO:0000269" key="8">
    <source>
    </source>
</evidence>
<evidence type="ECO:0000269" key="9">
    <source>
    </source>
</evidence>
<evidence type="ECO:0000305" key="10"/>
<reference key="1">
    <citation type="journal article" date="2003" name="Plant J.">
        <title>The AtGRF family of putative transcription factors is involved in leaf and cotyledon growth in Arabidopsis.</title>
        <authorList>
            <person name="Kim J.H."/>
            <person name="Choi D."/>
            <person name="Kende H."/>
        </authorList>
    </citation>
    <scope>NUCLEOTIDE SEQUENCE [MRNA]</scope>
    <scope>GENE FAMILY</scope>
    <scope>NOMENCLATURE</scope>
    <scope>FUNCTION</scope>
    <scope>TISSUE SPECIFICITY</scope>
</reference>
<reference key="2">
    <citation type="journal article" date="1999" name="Nature">
        <title>Sequence and analysis of chromosome 4 of the plant Arabidopsis thaliana.</title>
        <authorList>
            <person name="Mayer K.F.X."/>
            <person name="Schueller C."/>
            <person name="Wambutt R."/>
            <person name="Murphy G."/>
            <person name="Volckaert G."/>
            <person name="Pohl T."/>
            <person name="Duesterhoeft A."/>
            <person name="Stiekema W."/>
            <person name="Entian K.-D."/>
            <person name="Terryn N."/>
            <person name="Harris B."/>
            <person name="Ansorge W."/>
            <person name="Brandt P."/>
            <person name="Grivell L.A."/>
            <person name="Rieger M."/>
            <person name="Weichselgartner M."/>
            <person name="de Simone V."/>
            <person name="Obermaier B."/>
            <person name="Mache R."/>
            <person name="Mueller M."/>
            <person name="Kreis M."/>
            <person name="Delseny M."/>
            <person name="Puigdomenech P."/>
            <person name="Watson M."/>
            <person name="Schmidtheini T."/>
            <person name="Reichert B."/>
            <person name="Portetelle D."/>
            <person name="Perez-Alonso M."/>
            <person name="Boutry M."/>
            <person name="Bancroft I."/>
            <person name="Vos P."/>
            <person name="Hoheisel J."/>
            <person name="Zimmermann W."/>
            <person name="Wedler H."/>
            <person name="Ridley P."/>
            <person name="Langham S.-A."/>
            <person name="McCullagh B."/>
            <person name="Bilham L."/>
            <person name="Robben J."/>
            <person name="van der Schueren J."/>
            <person name="Grymonprez B."/>
            <person name="Chuang Y.-J."/>
            <person name="Vandenbussche F."/>
            <person name="Braeken M."/>
            <person name="Weltjens I."/>
            <person name="Voet M."/>
            <person name="Bastiaens I."/>
            <person name="Aert R."/>
            <person name="Defoor E."/>
            <person name="Weitzenegger T."/>
            <person name="Bothe G."/>
            <person name="Ramsperger U."/>
            <person name="Hilbert H."/>
            <person name="Braun M."/>
            <person name="Holzer E."/>
            <person name="Brandt A."/>
            <person name="Peters S."/>
            <person name="van Staveren M."/>
            <person name="Dirkse W."/>
            <person name="Mooijman P."/>
            <person name="Klein Lankhorst R."/>
            <person name="Rose M."/>
            <person name="Hauf J."/>
            <person name="Koetter P."/>
            <person name="Berneiser S."/>
            <person name="Hempel S."/>
            <person name="Feldpausch M."/>
            <person name="Lamberth S."/>
            <person name="Van den Daele H."/>
            <person name="De Keyser A."/>
            <person name="Buysshaert C."/>
            <person name="Gielen J."/>
            <person name="Villarroel R."/>
            <person name="De Clercq R."/>
            <person name="van Montagu M."/>
            <person name="Rogers J."/>
            <person name="Cronin A."/>
            <person name="Quail M.A."/>
            <person name="Bray-Allen S."/>
            <person name="Clark L."/>
            <person name="Doggett J."/>
            <person name="Hall S."/>
            <person name="Kay M."/>
            <person name="Lennard N."/>
            <person name="McLay K."/>
            <person name="Mayes R."/>
            <person name="Pettett A."/>
            <person name="Rajandream M.A."/>
            <person name="Lyne M."/>
            <person name="Benes V."/>
            <person name="Rechmann S."/>
            <person name="Borkova D."/>
            <person name="Bloecker H."/>
            <person name="Scharfe M."/>
            <person name="Grimm M."/>
            <person name="Loehnert T.-H."/>
            <person name="Dose S."/>
            <person name="de Haan M."/>
            <person name="Maarse A.C."/>
            <person name="Schaefer M."/>
            <person name="Mueller-Auer S."/>
            <person name="Gabel C."/>
            <person name="Fuchs M."/>
            <person name="Fartmann B."/>
            <person name="Granderath K."/>
            <person name="Dauner D."/>
            <person name="Herzl A."/>
            <person name="Neumann S."/>
            <person name="Argiriou A."/>
            <person name="Vitale D."/>
            <person name="Liguori R."/>
            <person name="Piravandi E."/>
            <person name="Massenet O."/>
            <person name="Quigley F."/>
            <person name="Clabauld G."/>
            <person name="Muendlein A."/>
            <person name="Felber R."/>
            <person name="Schnabl S."/>
            <person name="Hiller R."/>
            <person name="Schmidt W."/>
            <person name="Lecharny A."/>
            <person name="Aubourg S."/>
            <person name="Chefdor F."/>
            <person name="Cooke R."/>
            <person name="Berger C."/>
            <person name="Monfort A."/>
            <person name="Casacuberta E."/>
            <person name="Gibbons T."/>
            <person name="Weber N."/>
            <person name="Vandenbol M."/>
            <person name="Bargues M."/>
            <person name="Terol J."/>
            <person name="Torres A."/>
            <person name="Perez-Perez A."/>
            <person name="Purnelle B."/>
            <person name="Bent E."/>
            <person name="Johnson S."/>
            <person name="Tacon D."/>
            <person name="Jesse T."/>
            <person name="Heijnen L."/>
            <person name="Schwarz S."/>
            <person name="Scholler P."/>
            <person name="Heber S."/>
            <person name="Francs P."/>
            <person name="Bielke C."/>
            <person name="Frishman D."/>
            <person name="Haase D."/>
            <person name="Lemcke K."/>
            <person name="Mewes H.-W."/>
            <person name="Stocker S."/>
            <person name="Zaccaria P."/>
            <person name="Bevan M."/>
            <person name="Wilson R.K."/>
            <person name="de la Bastide M."/>
            <person name="Habermann K."/>
            <person name="Parnell L."/>
            <person name="Dedhia N."/>
            <person name="Gnoj L."/>
            <person name="Schutz K."/>
            <person name="Huang E."/>
            <person name="Spiegel L."/>
            <person name="Sekhon M."/>
            <person name="Murray J."/>
            <person name="Sheet P."/>
            <person name="Cordes M."/>
            <person name="Abu-Threideh J."/>
            <person name="Stoneking T."/>
            <person name="Kalicki J."/>
            <person name="Graves T."/>
            <person name="Harmon G."/>
            <person name="Edwards J."/>
            <person name="Latreille P."/>
            <person name="Courtney L."/>
            <person name="Cloud J."/>
            <person name="Abbott A."/>
            <person name="Scott K."/>
            <person name="Johnson D."/>
            <person name="Minx P."/>
            <person name="Bentley D."/>
            <person name="Fulton B."/>
            <person name="Miller N."/>
            <person name="Greco T."/>
            <person name="Kemp K."/>
            <person name="Kramer J."/>
            <person name="Fulton L."/>
            <person name="Mardis E."/>
            <person name="Dante M."/>
            <person name="Pepin K."/>
            <person name="Hillier L.W."/>
            <person name="Nelson J."/>
            <person name="Spieth J."/>
            <person name="Ryan E."/>
            <person name="Andrews S."/>
            <person name="Geisel C."/>
            <person name="Layman D."/>
            <person name="Du H."/>
            <person name="Ali J."/>
            <person name="Berghoff A."/>
            <person name="Jones K."/>
            <person name="Drone K."/>
            <person name="Cotton M."/>
            <person name="Joshu C."/>
            <person name="Antonoiu B."/>
            <person name="Zidanic M."/>
            <person name="Strong C."/>
            <person name="Sun H."/>
            <person name="Lamar B."/>
            <person name="Yordan C."/>
            <person name="Ma P."/>
            <person name="Zhong J."/>
            <person name="Preston R."/>
            <person name="Vil D."/>
            <person name="Shekher M."/>
            <person name="Matero A."/>
            <person name="Shah R."/>
            <person name="Swaby I.K."/>
            <person name="O'Shaughnessy A."/>
            <person name="Rodriguez M."/>
            <person name="Hoffman J."/>
            <person name="Till S."/>
            <person name="Granat S."/>
            <person name="Shohdy N."/>
            <person name="Hasegawa A."/>
            <person name="Hameed A."/>
            <person name="Lodhi M."/>
            <person name="Johnson A."/>
            <person name="Chen E."/>
            <person name="Marra M.A."/>
            <person name="Martienssen R."/>
            <person name="McCombie W.R."/>
        </authorList>
    </citation>
    <scope>NUCLEOTIDE SEQUENCE [LARGE SCALE GENOMIC DNA]</scope>
    <source>
        <strain>cv. Columbia</strain>
    </source>
</reference>
<reference key="3">
    <citation type="journal article" date="2017" name="Plant J.">
        <title>Araport11: a complete reannotation of the Arabidopsis thaliana reference genome.</title>
        <authorList>
            <person name="Cheng C.Y."/>
            <person name="Krishnakumar V."/>
            <person name="Chan A.P."/>
            <person name="Thibaud-Nissen F."/>
            <person name="Schobel S."/>
            <person name="Town C.D."/>
        </authorList>
    </citation>
    <scope>GENOME REANNOTATION</scope>
    <source>
        <strain>cv. Columbia</strain>
    </source>
</reference>
<reference key="4">
    <citation type="submission" date="2004-09" db="EMBL/GenBank/DDBJ databases">
        <title>Large-scale analysis of RIKEN Arabidopsis full-length (RAFL) cDNAs.</title>
        <authorList>
            <person name="Totoki Y."/>
            <person name="Seki M."/>
            <person name="Ishida J."/>
            <person name="Nakajima M."/>
            <person name="Enju A."/>
            <person name="Kamiya A."/>
            <person name="Narusaka M."/>
            <person name="Shin-i T."/>
            <person name="Nakagawa M."/>
            <person name="Sakamoto N."/>
            <person name="Oishi K."/>
            <person name="Kohara Y."/>
            <person name="Kobayashi M."/>
            <person name="Toyoda A."/>
            <person name="Sakaki Y."/>
            <person name="Sakurai T."/>
            <person name="Iida K."/>
            <person name="Akiyama K."/>
            <person name="Satou M."/>
            <person name="Toyoda T."/>
            <person name="Konagaya A."/>
            <person name="Carninci P."/>
            <person name="Kawai J."/>
            <person name="Hayashizaki Y."/>
            <person name="Shinozaki K."/>
        </authorList>
    </citation>
    <scope>NUCLEOTIDE SEQUENCE [LARGE SCALE MRNA]</scope>
    <source>
        <strain>cv. Columbia</strain>
    </source>
</reference>
<reference key="5">
    <citation type="submission" date="2009-03" db="EMBL/GenBank/DDBJ databases">
        <title>ORF cloning and analysis of Arabidopsis transcription factor genes.</title>
        <authorList>
            <person name="Fujita M."/>
            <person name="Mizukado S."/>
            <person name="Seki M."/>
            <person name="Shinozaki K."/>
            <person name="Mitsuda N."/>
            <person name="Takiguchi Y."/>
            <person name="Takagi M."/>
        </authorList>
    </citation>
    <scope>NUCLEOTIDE SEQUENCE [LARGE SCALE MRNA]</scope>
</reference>
<reference key="6">
    <citation type="journal article" date="2004" name="Mol. Cell">
        <title>Computational identification of plant microRNAs and their targets, including a stress-induced miRNA.</title>
        <authorList>
            <person name="Jones-Rhoades M.W."/>
            <person name="Bartel D.P."/>
        </authorList>
    </citation>
    <scope>INDUCTION</scope>
</reference>
<reference key="7">
    <citation type="journal article" date="2004" name="Proc. Natl. Acad. Sci. U.S.A.">
        <title>A transcriptional coactivator, AtGIF1, is involved in regulating leaf growth and morphology in Arabidopsis.</title>
        <authorList>
            <person name="Kim J.H."/>
            <person name="Kende H."/>
        </authorList>
    </citation>
    <scope>FUNCTION</scope>
    <scope>INTERACTION WITH GIF1</scope>
</reference>
<reference key="8">
    <citation type="journal article" date="2009" name="Physiol. Plantarum">
        <title>Ectopic expression of miR396 suppresses GRF target gene expression and alters leaf growth in Arabidopsis.</title>
        <authorList>
            <person name="Liu D."/>
            <person name="Song Y."/>
            <person name="Chen Z."/>
            <person name="Yu D."/>
        </authorList>
    </citation>
    <scope>INDUCTION</scope>
</reference>
<reference key="9">
    <citation type="journal article" date="2010" name="Development">
        <title>Control of cell proliferation in Arabidopsis thaliana by microRNA miR396.</title>
        <authorList>
            <person name="Rodriguez R.E."/>
            <person name="Mecchia M.A."/>
            <person name="Debernardi J.M."/>
            <person name="Schommer C."/>
            <person name="Weigel D."/>
            <person name="Palatnik J.F."/>
        </authorList>
    </citation>
    <scope>FUNCTION</scope>
    <scope>DEVELOPMENTAL STAGE</scope>
    <scope>INDUCTION</scope>
</reference>
<reference key="10">
    <citation type="journal article" date="2011" name="J. Exp. Bot.">
        <title>miR396-targeted AtGRF transcription factors are required for coordination of cell division and differentiation during leaf development in Arabidopsis.</title>
        <authorList>
            <person name="Wang L."/>
            <person name="Gu X."/>
            <person name="Xu D."/>
            <person name="Wang W."/>
            <person name="Wang H."/>
            <person name="Zeng M."/>
            <person name="Chang Z."/>
            <person name="Huang H."/>
            <person name="Cui X."/>
        </authorList>
    </citation>
    <scope>FUNCTION</scope>
    <scope>TISSUE SPECIFICITY</scope>
</reference>
<comment type="function">
    <text evidence="4 6 8 9">Transcription activator that plays a role in the regulation of cell expansion in leaf and cotyledons tissues. Component of a network formed by miR396, the GRFs and their interacting factors (GIFs) acting in the regulation of meristem function, at least partially through the control of cell proliferation.</text>
</comment>
<comment type="subunit">
    <text evidence="6">Interacts with GIF1.</text>
</comment>
<comment type="interaction">
    <interactant intactId="EBI-1396893">
        <id>Q8L8A8</id>
    </interactant>
    <interactant intactId="EBI-1396623">
        <id>Q8L8A5</id>
        <label>GIF1</label>
    </interactant>
    <organismsDiffer>false</organismsDiffer>
    <experiments>4</experiments>
</comment>
<comment type="interaction">
    <interactant intactId="EBI-1396893">
        <id>Q8L8A8</id>
    </interactant>
    <interactant intactId="EBI-1396863">
        <id>Q9MAL9</id>
        <label>GIF2</label>
    </interactant>
    <organismsDiffer>false</organismsDiffer>
    <experiments>3</experiments>
</comment>
<comment type="interaction">
    <interactant intactId="EBI-1396893">
        <id>Q8L8A8</id>
    </interactant>
    <interactant intactId="EBI-15194507">
        <id>Q93VH6</id>
        <label>GIF3</label>
    </interactant>
    <organismsDiffer>false</organismsDiffer>
    <experiments>3</experiments>
</comment>
<comment type="interaction">
    <interactant intactId="EBI-1396893">
        <id>Q8L8A8</id>
    </interactant>
    <interactant intactId="EBI-4424563">
        <id>Q93Z00</id>
        <label>TCP14</label>
    </interactant>
    <organismsDiffer>false</organismsDiffer>
    <experiments>3</experiments>
</comment>
<comment type="interaction">
    <interactant intactId="EBI-1396893">
        <id>Q8L8A8</id>
    </interactant>
    <interactant intactId="EBI-4426144">
        <id>Q9C9L2</id>
        <label>TCP15</label>
    </interactant>
    <organismsDiffer>false</organismsDiffer>
    <experiments>3</experiments>
</comment>
<comment type="subcellular location">
    <subcellularLocation>
        <location evidence="2">Nucleus</location>
    </subcellularLocation>
</comment>
<comment type="tissue specificity">
    <text evidence="4 9">Strongly expressed in actively growing and developing tissues, such as roots, upper stems, and shoot tips containing the shoot apical meristem (SAM) and flower buds. Detected in young leaf primordium. Also expressed in mature flowers, but weakly expressed in mature stems and leaves.</text>
</comment>
<comment type="developmental stage">
    <text evidence="8">Expressed during the early stages of leaf development and expression decreases with the maturation of the leaf.</text>
</comment>
<comment type="induction">
    <text evidence="5 7 8">microRNA 396 (miR396a or miR396b) negatively regulates growth-regulating factors (GRF1-4 and GRF7-9).</text>
</comment>
<comment type="domain">
    <text>The QLQ domain and WRC domain may be involved in protein-protein interaction and DNA-binding, respectively.</text>
</comment>
<comment type="miscellaneous">
    <text>Overexpression mutant display larger leaves and cotyledons, as well as a delayed bolting of the inflorescence stem when compared to wild-type plants.</text>
</comment>
<comment type="similarity">
    <text evidence="10">Belongs to the GRF family.</text>
</comment>
<comment type="sequence caution" evidence="10">
    <conflict type="erroneous gene model prediction">
        <sequence resource="EMBL-CDS" id="CAB38922"/>
    </conflict>
</comment>
<comment type="sequence caution" evidence="10">
    <conflict type="erroneous gene model prediction">
        <sequence resource="EMBL-CDS" id="CAB80439"/>
    </conflict>
</comment>
<proteinExistence type="evidence at protein level"/>
<organism>
    <name type="scientific">Arabidopsis thaliana</name>
    <name type="common">Mouse-ear cress</name>
    <dbReference type="NCBI Taxonomy" id="3702"/>
    <lineage>
        <taxon>Eukaryota</taxon>
        <taxon>Viridiplantae</taxon>
        <taxon>Streptophyta</taxon>
        <taxon>Embryophyta</taxon>
        <taxon>Tracheophyta</taxon>
        <taxon>Spermatophyta</taxon>
        <taxon>Magnoliopsida</taxon>
        <taxon>eudicotyledons</taxon>
        <taxon>Gunneridae</taxon>
        <taxon>Pentapetalae</taxon>
        <taxon>rosids</taxon>
        <taxon>malvids</taxon>
        <taxon>Brassicales</taxon>
        <taxon>Brassicaceae</taxon>
        <taxon>Camelineae</taxon>
        <taxon>Arabidopsis</taxon>
    </lineage>
</organism>
<protein>
    <recommendedName>
        <fullName>Growth-regulating factor 2</fullName>
        <shortName>AtGRF2</shortName>
    </recommendedName>
    <alternativeName>
        <fullName>Transcription activator GRF2</fullName>
    </alternativeName>
</protein>